<protein>
    <recommendedName>
        <fullName>Chaperone protein HscA</fullName>
    </recommendedName>
    <alternativeName>
        <fullName>Hsc66</fullName>
    </alternativeName>
</protein>
<reference key="1">
    <citation type="journal article" date="1994" name="J. Bacteriol.">
        <title>Mutations in a gene encoding a new Hsp70 suppress rapid DNA inversion and bgl activation, but not proU derepression, in hns-1 mutant Escherichia coli.</title>
        <authorList>
            <person name="Kawula T.H."/>
            <person name="Lelivelt M.J."/>
        </authorList>
    </citation>
    <scope>NUCLEOTIDE SEQUENCE [GENOMIC DNA]</scope>
    <source>
        <strain>K12</strain>
    </source>
</reference>
<reference key="2">
    <citation type="journal article" date="1994" name="Proc. Natl. Acad. Sci. U.S.A.">
        <title>A gene encoding a DnaK/hsp70 homolog in Escherichia coli.</title>
        <authorList>
            <person name="Seaton B.L."/>
            <person name="Vickery L.E."/>
        </authorList>
    </citation>
    <scope>NUCLEOTIDE SEQUENCE [GENOMIC DNA]</scope>
    <source>
        <strain>B</strain>
    </source>
</reference>
<reference key="3">
    <citation type="journal article" date="1997" name="DNA Res.">
        <title>Construction of a contiguous 874-kb sequence of the Escherichia coli-K12 genome corresponding to 50.0-68.8 min on the linkage map and analysis of its sequence features.</title>
        <authorList>
            <person name="Yamamoto Y."/>
            <person name="Aiba H."/>
            <person name="Baba T."/>
            <person name="Hayashi K."/>
            <person name="Inada T."/>
            <person name="Isono K."/>
            <person name="Itoh T."/>
            <person name="Kimura S."/>
            <person name="Kitagawa M."/>
            <person name="Makino K."/>
            <person name="Miki T."/>
            <person name="Mitsuhashi N."/>
            <person name="Mizobuchi K."/>
            <person name="Mori H."/>
            <person name="Nakade S."/>
            <person name="Nakamura Y."/>
            <person name="Nashimoto H."/>
            <person name="Oshima T."/>
            <person name="Oyama S."/>
            <person name="Saito N."/>
            <person name="Sampei G."/>
            <person name="Satoh Y."/>
            <person name="Sivasundaram S."/>
            <person name="Tagami H."/>
            <person name="Takahashi H."/>
            <person name="Takeda J."/>
            <person name="Takemoto K."/>
            <person name="Uehara K."/>
            <person name="Wada C."/>
            <person name="Yamagata S."/>
            <person name="Horiuchi T."/>
        </authorList>
    </citation>
    <scope>NUCLEOTIDE SEQUENCE [LARGE SCALE GENOMIC DNA]</scope>
    <source>
        <strain>K12 / W3110 / ATCC 27325 / DSM 5911</strain>
    </source>
</reference>
<reference key="4">
    <citation type="journal article" date="1997" name="Science">
        <title>The complete genome sequence of Escherichia coli K-12.</title>
        <authorList>
            <person name="Blattner F.R."/>
            <person name="Plunkett G. III"/>
            <person name="Bloch C.A."/>
            <person name="Perna N.T."/>
            <person name="Burland V."/>
            <person name="Riley M."/>
            <person name="Collado-Vides J."/>
            <person name="Glasner J.D."/>
            <person name="Rode C.K."/>
            <person name="Mayhew G.F."/>
            <person name="Gregor J."/>
            <person name="Davis N.W."/>
            <person name="Kirkpatrick H.A."/>
            <person name="Goeden M.A."/>
            <person name="Rose D.J."/>
            <person name="Mau B."/>
            <person name="Shao Y."/>
        </authorList>
    </citation>
    <scope>NUCLEOTIDE SEQUENCE [LARGE SCALE GENOMIC DNA]</scope>
    <source>
        <strain>K12 / MG1655 / ATCC 47076</strain>
    </source>
</reference>
<reference key="5">
    <citation type="journal article" date="2006" name="Mol. Syst. Biol.">
        <title>Highly accurate genome sequences of Escherichia coli K-12 strains MG1655 and W3110.</title>
        <authorList>
            <person name="Hayashi K."/>
            <person name="Morooka N."/>
            <person name="Yamamoto Y."/>
            <person name="Fujita K."/>
            <person name="Isono K."/>
            <person name="Choi S."/>
            <person name="Ohtsubo E."/>
            <person name="Baba T."/>
            <person name="Wanner B.L."/>
            <person name="Mori H."/>
            <person name="Horiuchi T."/>
        </authorList>
    </citation>
    <scope>NUCLEOTIDE SEQUENCE [LARGE SCALE GENOMIC DNA]</scope>
    <source>
        <strain>K12 / W3110 / ATCC 27325 / DSM 5911</strain>
    </source>
</reference>
<reference key="6">
    <citation type="journal article" date="1995" name="J. Bacteriol.">
        <title>Hsc66, an Hsp70 homolog in Escherichia coli, is induced by cold shock but not by heat shock.</title>
        <authorList>
            <person name="Lelivelt M.J."/>
            <person name="Kawula T.H."/>
        </authorList>
    </citation>
    <scope>INDUCTION</scope>
</reference>
<reference key="7">
    <citation type="journal article" date="1997" name="Protein Sci.">
        <title>Hsc66 and Hsc20, a new heat shock cognate molecular chaperone system from Escherichia coli.</title>
        <authorList>
            <person name="Vickery L.E."/>
            <person name="Silberg J.J."/>
            <person name="Ta D.T."/>
        </authorList>
    </citation>
    <scope>CHARACTERIZATION</scope>
</reference>
<reference key="8">
    <citation type="journal article" date="2000" name="Proc. Natl. Acad. Sci. U.S.A.">
        <title>Interaction of the iron-sulfur cluster assembly protein IscU with the Hsc66/Hsc20 molecular chaperone system of Escherichia coli.</title>
        <authorList>
            <person name="Hoff K.G."/>
            <person name="Silberg J.J."/>
            <person name="Vickery L.E."/>
        </authorList>
    </citation>
    <scope>CHARACTERIZATION</scope>
</reference>
<keyword id="KW-0002">3D-structure</keyword>
<keyword id="KW-0067">ATP-binding</keyword>
<keyword id="KW-0143">Chaperone</keyword>
<keyword id="KW-0547">Nucleotide-binding</keyword>
<keyword id="KW-1185">Reference proteome</keyword>
<keyword id="KW-0346">Stress response</keyword>
<gene>
    <name type="primary">hscA</name>
    <name type="synonym">hsc</name>
    <name type="ordered locus">b2526</name>
    <name type="ordered locus">JW2510</name>
</gene>
<proteinExistence type="evidence at protein level"/>
<name>HSCA_ECOLI</name>
<organism>
    <name type="scientific">Escherichia coli (strain K12)</name>
    <dbReference type="NCBI Taxonomy" id="83333"/>
    <lineage>
        <taxon>Bacteria</taxon>
        <taxon>Pseudomonadati</taxon>
        <taxon>Pseudomonadota</taxon>
        <taxon>Gammaproteobacteria</taxon>
        <taxon>Enterobacterales</taxon>
        <taxon>Enterobacteriaceae</taxon>
        <taxon>Escherichia</taxon>
    </lineage>
</organism>
<sequence>MALLQISEPGLSAAPHQRRLAAGIDLGTTNSLVATVRSGQAETLADHEGRHLLPSVVHYQQQGHSVGYDARTNAALDTANTISSVKRLMGRSLADIQQRYPHLPYQFQASENGLPMIETAAGLLNPVRVSADILKALAARATEALAGELDGVVITVPAYFDDAQRQGTKDAARLAGLHVLRLLNEPTAAAIAYGLDSGQEGVIAVYDLGGGTFDISILRLSRGVFEVLATGGDSALGGDDFDHLLADYIREQAGIPDRSDNRVQRELLDAAIAAKIALSDADSVTVNVAGWQGEISREQFNELIAPLVKRTLLACRRALKDAGVEADEVLEVVMVGGSTRVPLVRERVGEFFGRPPLTSIDPDKVVAIGAAIQADILVGNKPDSEMLLLDVIPLSLGLETMGGLVEKVIPRNTTIPVARAQDFTTFKDGQTAMSIHVMQGERELVQDCRSLARFALRGIPALPAGGAHIRVTFQVDADGLLSVTAMEKSTGVEASIQVKPSYGLTDSEIASMIKDSMSYAEQDVKARMLAEQKVEAARVLESLHGALAADAALLSAAERQVIDDAAAHLSEVAQGDDVDAIEQAIKNVDKQTQDFAARRMDQSVRRALKGHSVDEV</sequence>
<dbReference type="EMBL" id="U01827">
    <property type="protein sequence ID" value="AAA18300.1"/>
    <property type="molecule type" value="Unassigned_DNA"/>
</dbReference>
<dbReference type="EMBL" id="U05338">
    <property type="protein sequence ID" value="AAD13473.1"/>
    <property type="molecule type" value="Genomic_DNA"/>
</dbReference>
<dbReference type="EMBL" id="U00096">
    <property type="protein sequence ID" value="AAC75579.1"/>
    <property type="molecule type" value="Genomic_DNA"/>
</dbReference>
<dbReference type="EMBL" id="AP009048">
    <property type="protein sequence ID" value="BAA16420.1"/>
    <property type="molecule type" value="Genomic_DNA"/>
</dbReference>
<dbReference type="PIR" id="E65029">
    <property type="entry name" value="E65029"/>
</dbReference>
<dbReference type="RefSeq" id="NP_417021.1">
    <property type="nucleotide sequence ID" value="NC_000913.3"/>
</dbReference>
<dbReference type="RefSeq" id="WP_001196613.1">
    <property type="nucleotide sequence ID" value="NZ_STEB01000011.1"/>
</dbReference>
<dbReference type="PDB" id="1U00">
    <property type="method" value="X-ray"/>
    <property type="resolution" value="1.95 A"/>
    <property type="chains" value="A=389-615"/>
</dbReference>
<dbReference type="PDBsum" id="1U00"/>
<dbReference type="SMR" id="P0A6Z1"/>
<dbReference type="BioGRID" id="4262906">
    <property type="interactions" value="96"/>
</dbReference>
<dbReference type="BioGRID" id="849285">
    <property type="interactions" value="2"/>
</dbReference>
<dbReference type="DIP" id="DIP-47348N"/>
<dbReference type="FunCoup" id="P0A6Z1">
    <property type="interactions" value="149"/>
</dbReference>
<dbReference type="IntAct" id="P0A6Z1">
    <property type="interactions" value="28"/>
</dbReference>
<dbReference type="STRING" id="511145.b2526"/>
<dbReference type="jPOST" id="P0A6Z1"/>
<dbReference type="PaxDb" id="511145-b2526"/>
<dbReference type="EnsemblBacteria" id="AAC75579">
    <property type="protein sequence ID" value="AAC75579"/>
    <property type="gene ID" value="b2526"/>
</dbReference>
<dbReference type="GeneID" id="93774610"/>
<dbReference type="GeneID" id="944885"/>
<dbReference type="KEGG" id="ecj:JW2510"/>
<dbReference type="KEGG" id="eco:b2526"/>
<dbReference type="KEGG" id="ecoc:C3026_14000"/>
<dbReference type="PATRIC" id="fig|1411691.4.peg.4208"/>
<dbReference type="EchoBASE" id="EB2051"/>
<dbReference type="eggNOG" id="COG0443">
    <property type="taxonomic scope" value="Bacteria"/>
</dbReference>
<dbReference type="HOGENOM" id="CLU_005965_2_1_6"/>
<dbReference type="InParanoid" id="P0A6Z1"/>
<dbReference type="OMA" id="GGESHMP"/>
<dbReference type="OrthoDB" id="9766019at2"/>
<dbReference type="PhylomeDB" id="P0A6Z1"/>
<dbReference type="BioCyc" id="EcoCyc:EG12130-MONOMER"/>
<dbReference type="BioCyc" id="MetaCyc:EG12130-MONOMER"/>
<dbReference type="EvolutionaryTrace" id="P0A6Z1"/>
<dbReference type="PRO" id="PR:P0A6Z1"/>
<dbReference type="Proteomes" id="UP000000625">
    <property type="component" value="Chromosome"/>
</dbReference>
<dbReference type="GO" id="GO:0005829">
    <property type="term" value="C:cytosol"/>
    <property type="evidence" value="ECO:0000314"/>
    <property type="project" value="EcoCyc"/>
</dbReference>
<dbReference type="GO" id="GO:1990230">
    <property type="term" value="C:iron-sulfur cluster transfer complex"/>
    <property type="evidence" value="ECO:0000314"/>
    <property type="project" value="EcoCyc"/>
</dbReference>
<dbReference type="GO" id="GO:0043531">
    <property type="term" value="F:ADP binding"/>
    <property type="evidence" value="ECO:0000314"/>
    <property type="project" value="EcoCyc"/>
</dbReference>
<dbReference type="GO" id="GO:0005524">
    <property type="term" value="F:ATP binding"/>
    <property type="evidence" value="ECO:0000314"/>
    <property type="project" value="EcoCyc"/>
</dbReference>
<dbReference type="GO" id="GO:0016887">
    <property type="term" value="F:ATP hydrolysis activity"/>
    <property type="evidence" value="ECO:0000314"/>
    <property type="project" value="EcoCyc"/>
</dbReference>
<dbReference type="GO" id="GO:0140662">
    <property type="term" value="F:ATP-dependent protein folding chaperone"/>
    <property type="evidence" value="ECO:0007669"/>
    <property type="project" value="InterPro"/>
</dbReference>
<dbReference type="GO" id="GO:0031072">
    <property type="term" value="F:heat shock protein binding"/>
    <property type="evidence" value="ECO:0000318"/>
    <property type="project" value="GO_Central"/>
</dbReference>
<dbReference type="GO" id="GO:0044183">
    <property type="term" value="F:protein folding chaperone"/>
    <property type="evidence" value="ECO:0000318"/>
    <property type="project" value="GO_Central"/>
</dbReference>
<dbReference type="GO" id="GO:0051082">
    <property type="term" value="F:unfolded protein binding"/>
    <property type="evidence" value="ECO:0007669"/>
    <property type="project" value="InterPro"/>
</dbReference>
<dbReference type="GO" id="GO:0070417">
    <property type="term" value="P:cellular response to cold"/>
    <property type="evidence" value="ECO:0000270"/>
    <property type="project" value="EcoCyc"/>
</dbReference>
<dbReference type="GO" id="GO:0051085">
    <property type="term" value="P:chaperone cofactor-dependent protein refolding"/>
    <property type="evidence" value="ECO:0000318"/>
    <property type="project" value="GO_Central"/>
</dbReference>
<dbReference type="GO" id="GO:0016226">
    <property type="term" value="P:iron-sulfur cluster assembly"/>
    <property type="evidence" value="ECO:0007669"/>
    <property type="project" value="InterPro"/>
</dbReference>
<dbReference type="GO" id="GO:0042026">
    <property type="term" value="P:protein refolding"/>
    <property type="evidence" value="ECO:0000318"/>
    <property type="project" value="GO_Central"/>
</dbReference>
<dbReference type="CDD" id="cd10236">
    <property type="entry name" value="ASKHA_NBD_HSP70_HscA"/>
    <property type="match status" value="1"/>
</dbReference>
<dbReference type="FunFam" id="1.20.1270.10:FF:000006">
    <property type="entry name" value="Chaperone protein HscA"/>
    <property type="match status" value="1"/>
</dbReference>
<dbReference type="FunFam" id="3.30.420.40:FF:000046">
    <property type="entry name" value="Chaperone protein HscA"/>
    <property type="match status" value="1"/>
</dbReference>
<dbReference type="FunFam" id="3.90.640.10:FF:000013">
    <property type="entry name" value="Chaperone protein HscA"/>
    <property type="match status" value="1"/>
</dbReference>
<dbReference type="FunFam" id="2.60.34.10:FF:000005">
    <property type="entry name" value="Chaperone protein HscA homolog"/>
    <property type="match status" value="1"/>
</dbReference>
<dbReference type="FunFam" id="3.30.420.40:FF:000020">
    <property type="entry name" value="Chaperone protein HscA homolog"/>
    <property type="match status" value="1"/>
</dbReference>
<dbReference type="Gene3D" id="1.20.1270.10">
    <property type="match status" value="1"/>
</dbReference>
<dbReference type="Gene3D" id="3.30.420.40">
    <property type="match status" value="2"/>
</dbReference>
<dbReference type="Gene3D" id="3.90.640.10">
    <property type="entry name" value="Actin, Chain A, domain 4"/>
    <property type="match status" value="1"/>
</dbReference>
<dbReference type="Gene3D" id="2.60.34.10">
    <property type="entry name" value="Substrate Binding Domain Of DNAk, Chain A, domain 1"/>
    <property type="match status" value="1"/>
</dbReference>
<dbReference type="HAMAP" id="MF_00679">
    <property type="entry name" value="HscA"/>
    <property type="match status" value="1"/>
</dbReference>
<dbReference type="InterPro" id="IPR043129">
    <property type="entry name" value="ATPase_NBD"/>
</dbReference>
<dbReference type="InterPro" id="IPR018181">
    <property type="entry name" value="Heat_shock_70_CS"/>
</dbReference>
<dbReference type="InterPro" id="IPR042039">
    <property type="entry name" value="HscA_NBD"/>
</dbReference>
<dbReference type="InterPro" id="IPR029048">
    <property type="entry name" value="HSP70_C_sf"/>
</dbReference>
<dbReference type="InterPro" id="IPR029047">
    <property type="entry name" value="HSP70_peptide-bd_sf"/>
</dbReference>
<dbReference type="InterPro" id="IPR013126">
    <property type="entry name" value="Hsp_70_fam"/>
</dbReference>
<dbReference type="InterPro" id="IPR010236">
    <property type="entry name" value="ISC_FeS_clus_asmbl_HscA"/>
</dbReference>
<dbReference type="NCBIfam" id="TIGR01991">
    <property type="entry name" value="HscA"/>
    <property type="match status" value="1"/>
</dbReference>
<dbReference type="NCBIfam" id="NF003520">
    <property type="entry name" value="PRK05183.1"/>
    <property type="match status" value="1"/>
</dbReference>
<dbReference type="PANTHER" id="PTHR19375">
    <property type="entry name" value="HEAT SHOCK PROTEIN 70KDA"/>
    <property type="match status" value="1"/>
</dbReference>
<dbReference type="Pfam" id="PF00012">
    <property type="entry name" value="HSP70"/>
    <property type="match status" value="1"/>
</dbReference>
<dbReference type="PRINTS" id="PR00301">
    <property type="entry name" value="HEATSHOCK70"/>
</dbReference>
<dbReference type="SUPFAM" id="SSF53067">
    <property type="entry name" value="Actin-like ATPase domain"/>
    <property type="match status" value="2"/>
</dbReference>
<dbReference type="SUPFAM" id="SSF100934">
    <property type="entry name" value="Heat shock protein 70kD (HSP70), C-terminal subdomain"/>
    <property type="match status" value="1"/>
</dbReference>
<dbReference type="SUPFAM" id="SSF100920">
    <property type="entry name" value="Heat shock protein 70kD (HSP70), peptide-binding domain"/>
    <property type="match status" value="1"/>
</dbReference>
<dbReference type="PROSITE" id="PS00297">
    <property type="entry name" value="HSP70_1"/>
    <property type="match status" value="1"/>
</dbReference>
<dbReference type="PROSITE" id="PS00329">
    <property type="entry name" value="HSP70_2"/>
    <property type="match status" value="1"/>
</dbReference>
<dbReference type="PROSITE" id="PS01036">
    <property type="entry name" value="HSP70_3"/>
    <property type="match status" value="1"/>
</dbReference>
<feature type="chain" id="PRO_0000078625" description="Chaperone protein HscA">
    <location>
        <begin position="1"/>
        <end position="616"/>
    </location>
</feature>
<feature type="sequence variant" description="In hsca1.">
    <original>S</original>
    <variation>F</variation>
    <location>
        <position position="216"/>
    </location>
</feature>
<feature type="sequence conflict" description="In Ref. 1; AAA18300." evidence="2" ref="1">
    <original>LRGIPALPAG</original>
    <variation>CVVFRRYRLA</variation>
    <location>
        <begin position="456"/>
        <end position="465"/>
    </location>
</feature>
<feature type="sequence conflict" description="In Ref. 1; AAA18300." evidence="2" ref="1">
    <original>S</original>
    <variation>T</variation>
    <location>
        <position position="516"/>
    </location>
</feature>
<feature type="sequence conflict" description="In Ref. 1; AAA18300." evidence="2" ref="1">
    <location>
        <position position="557"/>
    </location>
</feature>
<feature type="sequence conflict" description="In Ref. 2; AAD13473." evidence="2" ref="2">
    <original>Q</original>
    <variation>K</variation>
    <location>
        <position position="583"/>
    </location>
</feature>
<feature type="strand" evidence="3">
    <location>
        <begin position="396"/>
        <end position="400"/>
    </location>
</feature>
<feature type="turn" evidence="3">
    <location>
        <begin position="401"/>
        <end position="403"/>
    </location>
</feature>
<feature type="strand" evidence="3">
    <location>
        <begin position="404"/>
        <end position="409"/>
    </location>
</feature>
<feature type="strand" evidence="3">
    <location>
        <begin position="414"/>
        <end position="424"/>
    </location>
</feature>
<feature type="strand" evidence="3">
    <location>
        <begin position="433"/>
        <end position="439"/>
    </location>
</feature>
<feature type="strand" evidence="3">
    <location>
        <begin position="441"/>
        <end position="444"/>
    </location>
</feature>
<feature type="helix" evidence="3">
    <location>
        <begin position="445"/>
        <end position="447"/>
    </location>
</feature>
<feature type="strand" evidence="3">
    <location>
        <begin position="448"/>
        <end position="456"/>
    </location>
</feature>
<feature type="strand" evidence="3">
    <location>
        <begin position="469"/>
        <end position="475"/>
    </location>
</feature>
<feature type="strand" evidence="3">
    <location>
        <begin position="481"/>
        <end position="487"/>
    </location>
</feature>
<feature type="turn" evidence="3">
    <location>
        <begin position="488"/>
        <end position="490"/>
    </location>
</feature>
<feature type="strand" evidence="3">
    <location>
        <begin position="493"/>
        <end position="498"/>
    </location>
</feature>
<feature type="helix" evidence="3">
    <location>
        <begin position="506"/>
        <end position="518"/>
    </location>
</feature>
<feature type="helix" evidence="3">
    <location>
        <begin position="520"/>
        <end position="550"/>
    </location>
</feature>
<feature type="helix" evidence="3">
    <location>
        <begin position="551"/>
        <end position="553"/>
    </location>
</feature>
<feature type="helix" evidence="3">
    <location>
        <begin position="556"/>
        <end position="572"/>
    </location>
</feature>
<feature type="helix" evidence="3">
    <location>
        <begin position="578"/>
        <end position="609"/>
    </location>
</feature>
<evidence type="ECO:0000269" key="1">
    <source>
    </source>
</evidence>
<evidence type="ECO:0000305" key="2"/>
<evidence type="ECO:0007829" key="3">
    <source>
        <dbReference type="PDB" id="1U00"/>
    </source>
</evidence>
<accession>P0A6Z1</accession>
<accession>P36541</accession>
<accession>P76990</accession>
<accession>P77497</accession>
<comment type="function">
    <text>Chaperone involved in the maturation of iron-sulfur cluster-containing proteins. Has a low intrinsic ATPase activity which is markedly stimulated by HscB. Involved in the maturation of IscU.</text>
</comment>
<comment type="induction">
    <text evidence="1">By cold shock.</text>
</comment>
<comment type="similarity">
    <text evidence="2">Belongs to the heat shock protein 70 family.</text>
</comment>